<feature type="chain" id="PRO_0000301418" description="UDP-N-acetylmuramoylalanine--D-glutamate ligase">
    <location>
        <begin position="1"/>
        <end position="502"/>
    </location>
</feature>
<feature type="region of interest" description="Disordered" evidence="2">
    <location>
        <begin position="288"/>
        <end position="307"/>
    </location>
</feature>
<feature type="binding site" evidence="1">
    <location>
        <begin position="129"/>
        <end position="135"/>
    </location>
    <ligand>
        <name>ATP</name>
        <dbReference type="ChEBI" id="CHEBI:30616"/>
    </ligand>
</feature>
<comment type="function">
    <text evidence="1">Cell wall formation. Catalyzes the addition of glutamate to the nucleotide precursor UDP-N-acetylmuramoyl-L-alanine (UMA).</text>
</comment>
<comment type="catalytic activity">
    <reaction evidence="1">
        <text>UDP-N-acetyl-alpha-D-muramoyl-L-alanine + D-glutamate + ATP = UDP-N-acetyl-alpha-D-muramoyl-L-alanyl-D-glutamate + ADP + phosphate + H(+)</text>
        <dbReference type="Rhea" id="RHEA:16429"/>
        <dbReference type="ChEBI" id="CHEBI:15378"/>
        <dbReference type="ChEBI" id="CHEBI:29986"/>
        <dbReference type="ChEBI" id="CHEBI:30616"/>
        <dbReference type="ChEBI" id="CHEBI:43474"/>
        <dbReference type="ChEBI" id="CHEBI:83898"/>
        <dbReference type="ChEBI" id="CHEBI:83900"/>
        <dbReference type="ChEBI" id="CHEBI:456216"/>
        <dbReference type="EC" id="6.3.2.9"/>
    </reaction>
</comment>
<comment type="pathway">
    <text evidence="1">Cell wall biogenesis; peptidoglycan biosynthesis.</text>
</comment>
<comment type="subcellular location">
    <subcellularLocation>
        <location evidence="1">Cytoplasm</location>
    </subcellularLocation>
</comment>
<comment type="similarity">
    <text evidence="1">Belongs to the MurCDEF family.</text>
</comment>
<organism>
    <name type="scientific">Burkholderia ambifaria (strain ATCC BAA-244 / DSM 16087 / CCUG 44356 / LMG 19182 / AMMD)</name>
    <name type="common">Burkholderia cepacia (strain AMMD)</name>
    <dbReference type="NCBI Taxonomy" id="339670"/>
    <lineage>
        <taxon>Bacteria</taxon>
        <taxon>Pseudomonadati</taxon>
        <taxon>Pseudomonadota</taxon>
        <taxon>Betaproteobacteria</taxon>
        <taxon>Burkholderiales</taxon>
        <taxon>Burkholderiaceae</taxon>
        <taxon>Burkholderia</taxon>
        <taxon>Burkholderia cepacia complex</taxon>
    </lineage>
</organism>
<dbReference type="EC" id="6.3.2.9" evidence="1"/>
<dbReference type="EMBL" id="CP000440">
    <property type="protein sequence ID" value="ABI86020.1"/>
    <property type="molecule type" value="Genomic_DNA"/>
</dbReference>
<dbReference type="RefSeq" id="WP_011655891.1">
    <property type="nucleotide sequence ID" value="NZ_CP009798.1"/>
</dbReference>
<dbReference type="SMR" id="Q0BIK3"/>
<dbReference type="GeneID" id="93084122"/>
<dbReference type="KEGG" id="bam:Bamb_0461"/>
<dbReference type="PATRIC" id="fig|339670.21.peg.1145"/>
<dbReference type="eggNOG" id="COG0771">
    <property type="taxonomic scope" value="Bacteria"/>
</dbReference>
<dbReference type="UniPathway" id="UPA00219"/>
<dbReference type="Proteomes" id="UP000000662">
    <property type="component" value="Chromosome 1"/>
</dbReference>
<dbReference type="GO" id="GO:0005737">
    <property type="term" value="C:cytoplasm"/>
    <property type="evidence" value="ECO:0007669"/>
    <property type="project" value="UniProtKB-SubCell"/>
</dbReference>
<dbReference type="GO" id="GO:0005524">
    <property type="term" value="F:ATP binding"/>
    <property type="evidence" value="ECO:0007669"/>
    <property type="project" value="UniProtKB-UniRule"/>
</dbReference>
<dbReference type="GO" id="GO:0008764">
    <property type="term" value="F:UDP-N-acetylmuramoylalanine-D-glutamate ligase activity"/>
    <property type="evidence" value="ECO:0007669"/>
    <property type="project" value="UniProtKB-UniRule"/>
</dbReference>
<dbReference type="GO" id="GO:0051301">
    <property type="term" value="P:cell division"/>
    <property type="evidence" value="ECO:0007669"/>
    <property type="project" value="UniProtKB-KW"/>
</dbReference>
<dbReference type="GO" id="GO:0071555">
    <property type="term" value="P:cell wall organization"/>
    <property type="evidence" value="ECO:0007669"/>
    <property type="project" value="UniProtKB-KW"/>
</dbReference>
<dbReference type="GO" id="GO:0009252">
    <property type="term" value="P:peptidoglycan biosynthetic process"/>
    <property type="evidence" value="ECO:0007669"/>
    <property type="project" value="UniProtKB-UniRule"/>
</dbReference>
<dbReference type="GO" id="GO:0008360">
    <property type="term" value="P:regulation of cell shape"/>
    <property type="evidence" value="ECO:0007669"/>
    <property type="project" value="UniProtKB-KW"/>
</dbReference>
<dbReference type="Gene3D" id="3.90.190.20">
    <property type="entry name" value="Mur ligase, C-terminal domain"/>
    <property type="match status" value="1"/>
</dbReference>
<dbReference type="Gene3D" id="3.40.1190.10">
    <property type="entry name" value="Mur-like, catalytic domain"/>
    <property type="match status" value="1"/>
</dbReference>
<dbReference type="Gene3D" id="3.40.50.720">
    <property type="entry name" value="NAD(P)-binding Rossmann-like Domain"/>
    <property type="match status" value="1"/>
</dbReference>
<dbReference type="HAMAP" id="MF_00639">
    <property type="entry name" value="MurD"/>
    <property type="match status" value="1"/>
</dbReference>
<dbReference type="InterPro" id="IPR036565">
    <property type="entry name" value="Mur-like_cat_sf"/>
</dbReference>
<dbReference type="InterPro" id="IPR004101">
    <property type="entry name" value="Mur_ligase_C"/>
</dbReference>
<dbReference type="InterPro" id="IPR036615">
    <property type="entry name" value="Mur_ligase_C_dom_sf"/>
</dbReference>
<dbReference type="InterPro" id="IPR013221">
    <property type="entry name" value="Mur_ligase_cen"/>
</dbReference>
<dbReference type="InterPro" id="IPR005762">
    <property type="entry name" value="MurD"/>
</dbReference>
<dbReference type="NCBIfam" id="TIGR01087">
    <property type="entry name" value="murD"/>
    <property type="match status" value="1"/>
</dbReference>
<dbReference type="PANTHER" id="PTHR43692">
    <property type="entry name" value="UDP-N-ACETYLMURAMOYLALANINE--D-GLUTAMATE LIGASE"/>
    <property type="match status" value="1"/>
</dbReference>
<dbReference type="PANTHER" id="PTHR43692:SF1">
    <property type="entry name" value="UDP-N-ACETYLMURAMOYLALANINE--D-GLUTAMATE LIGASE"/>
    <property type="match status" value="1"/>
</dbReference>
<dbReference type="Pfam" id="PF02875">
    <property type="entry name" value="Mur_ligase_C"/>
    <property type="match status" value="1"/>
</dbReference>
<dbReference type="Pfam" id="PF08245">
    <property type="entry name" value="Mur_ligase_M"/>
    <property type="match status" value="1"/>
</dbReference>
<dbReference type="Pfam" id="PF21799">
    <property type="entry name" value="MurD-like_N"/>
    <property type="match status" value="1"/>
</dbReference>
<dbReference type="SUPFAM" id="SSF51984">
    <property type="entry name" value="MurCD N-terminal domain"/>
    <property type="match status" value="1"/>
</dbReference>
<dbReference type="SUPFAM" id="SSF53623">
    <property type="entry name" value="MurD-like peptide ligases, catalytic domain"/>
    <property type="match status" value="1"/>
</dbReference>
<dbReference type="SUPFAM" id="SSF53244">
    <property type="entry name" value="MurD-like peptide ligases, peptide-binding domain"/>
    <property type="match status" value="1"/>
</dbReference>
<evidence type="ECO:0000255" key="1">
    <source>
        <dbReference type="HAMAP-Rule" id="MF_00639"/>
    </source>
</evidence>
<evidence type="ECO:0000256" key="2">
    <source>
        <dbReference type="SAM" id="MobiDB-lite"/>
    </source>
</evidence>
<gene>
    <name evidence="1" type="primary">murD</name>
    <name type="ordered locus">Bamb_0461</name>
</gene>
<name>MURD_BURCM</name>
<protein>
    <recommendedName>
        <fullName evidence="1">UDP-N-acetylmuramoylalanine--D-glutamate ligase</fullName>
        <ecNumber evidence="1">6.3.2.9</ecNumber>
    </recommendedName>
    <alternativeName>
        <fullName evidence="1">D-glutamic acid-adding enzyme</fullName>
    </alternativeName>
    <alternativeName>
        <fullName evidence="1">UDP-N-acetylmuramoyl-L-alanyl-D-glutamate synthetase</fullName>
    </alternativeName>
</protein>
<sequence>MFGDRQRPMVLVLGLGESGLAIARWCARHGCRLRIADTREAPPNLAALQAEGIDAEFVGGPFTPALLDGGVEIVGLSPGLSPLEPALAALIAAANERAIAVWGELEFFAQALRALGTSGYQPKVLAITGTNGKTTTTNLTGLLCQRSGKKVAVAGNISPAMLDRLARAIDETALPDVWVLELSSFQLETARTFAPDAAAILNITQDHLDWHGSFDAYAAAKGRIFGATTTRVLNRDDAAVMKFAPAAGAADAARTVTFGLNEPAQQGDYGLSRDNGIAWLVEAVDRDAPDETTSRRRKRDGAHTPDIAQKRLMPADALRIRGLHNAANALAAFALARAIDLPAAPLLHALREYRGEAHRVEVIATIDDVDYVDDSKGTNVGATVAALDGLAQKIVLIAGGDGKGQDFAPLVAPVARWCRAVMLIGRDAPAIRDTLAETGVPLADHATLEAAVHAAAELAEPGDAVLLSPACASLDMFRNYAHRADVFRAAVDEIAIDKGATT</sequence>
<proteinExistence type="inferred from homology"/>
<keyword id="KW-0067">ATP-binding</keyword>
<keyword id="KW-0131">Cell cycle</keyword>
<keyword id="KW-0132">Cell division</keyword>
<keyword id="KW-0133">Cell shape</keyword>
<keyword id="KW-0961">Cell wall biogenesis/degradation</keyword>
<keyword id="KW-0963">Cytoplasm</keyword>
<keyword id="KW-0436">Ligase</keyword>
<keyword id="KW-0547">Nucleotide-binding</keyword>
<keyword id="KW-0573">Peptidoglycan synthesis</keyword>
<reference key="1">
    <citation type="submission" date="2006-08" db="EMBL/GenBank/DDBJ databases">
        <title>Complete sequence of chromosome 1 of Burkholderia cepacia AMMD.</title>
        <authorList>
            <person name="Copeland A."/>
            <person name="Lucas S."/>
            <person name="Lapidus A."/>
            <person name="Barry K."/>
            <person name="Detter J.C."/>
            <person name="Glavina del Rio T."/>
            <person name="Hammon N."/>
            <person name="Israni S."/>
            <person name="Pitluck S."/>
            <person name="Bruce D."/>
            <person name="Chain P."/>
            <person name="Malfatti S."/>
            <person name="Shin M."/>
            <person name="Vergez L."/>
            <person name="Schmutz J."/>
            <person name="Larimer F."/>
            <person name="Land M."/>
            <person name="Hauser L."/>
            <person name="Kyrpides N."/>
            <person name="Kim E."/>
            <person name="Parke J."/>
            <person name="Coenye T."/>
            <person name="Konstantinidis K."/>
            <person name="Ramette A."/>
            <person name="Tiedje J."/>
            <person name="Richardson P."/>
        </authorList>
    </citation>
    <scope>NUCLEOTIDE SEQUENCE [LARGE SCALE GENOMIC DNA]</scope>
    <source>
        <strain>ATCC BAA-244 / DSM 16087 / CCUG 44356 / LMG 19182 / AMMD</strain>
    </source>
</reference>
<accession>Q0BIK3</accession>